<organism>
    <name type="scientific">Mus musculus</name>
    <name type="common">Mouse</name>
    <dbReference type="NCBI Taxonomy" id="10090"/>
    <lineage>
        <taxon>Eukaryota</taxon>
        <taxon>Metazoa</taxon>
        <taxon>Chordata</taxon>
        <taxon>Craniata</taxon>
        <taxon>Vertebrata</taxon>
        <taxon>Euteleostomi</taxon>
        <taxon>Mammalia</taxon>
        <taxon>Eutheria</taxon>
        <taxon>Euarchontoglires</taxon>
        <taxon>Glires</taxon>
        <taxon>Rodentia</taxon>
        <taxon>Myomorpha</taxon>
        <taxon>Muroidea</taxon>
        <taxon>Muridae</taxon>
        <taxon>Murinae</taxon>
        <taxon>Mus</taxon>
        <taxon>Mus</taxon>
    </lineage>
</organism>
<dbReference type="EMBL" id="CR974473">
    <property type="status" value="NOT_ANNOTATED_CDS"/>
    <property type="molecule type" value="Genomic_DNA"/>
</dbReference>
<dbReference type="EMBL" id="BC055373">
    <property type="protein sequence ID" value="AAH55373.1"/>
    <property type="molecule type" value="mRNA"/>
</dbReference>
<dbReference type="CCDS" id="CCDS28699.1"/>
<dbReference type="RefSeq" id="NP_001008424.2">
    <property type="nucleotide sequence ID" value="NM_001008424.3"/>
</dbReference>
<dbReference type="SMR" id="Q7TPC1"/>
<dbReference type="BioGRID" id="239715">
    <property type="interactions" value="5"/>
</dbReference>
<dbReference type="FunCoup" id="Q7TPC1">
    <property type="interactions" value="31"/>
</dbReference>
<dbReference type="STRING" id="10090.ENSMUSP00000048596"/>
<dbReference type="iPTMnet" id="Q7TPC1"/>
<dbReference type="PhosphoSitePlus" id="Q7TPC1"/>
<dbReference type="PaxDb" id="10090-ENSMUSP00000048596"/>
<dbReference type="PeptideAtlas" id="Q7TPC1"/>
<dbReference type="ProteomicsDB" id="281302"/>
<dbReference type="Antibodypedia" id="26774">
    <property type="antibodies" value="145 antibodies from 20 providers"/>
</dbReference>
<dbReference type="Ensembl" id="ENSMUST00000044804.8">
    <property type="protein sequence ID" value="ENSMUSP00000048596.8"/>
    <property type="gene ID" value="ENSMUSG00000039518.8"/>
</dbReference>
<dbReference type="GeneID" id="386463"/>
<dbReference type="KEGG" id="mmu:386463"/>
<dbReference type="UCSC" id="uc008cia.1">
    <property type="organism name" value="mouse"/>
</dbReference>
<dbReference type="AGR" id="MGI:3505689"/>
<dbReference type="CTD" id="1041"/>
<dbReference type="MGI" id="MGI:3505689">
    <property type="gene designation" value="Cdsn"/>
</dbReference>
<dbReference type="VEuPathDB" id="HostDB:ENSMUSG00000039518"/>
<dbReference type="eggNOG" id="ENOG502SQ6F">
    <property type="taxonomic scope" value="Eukaryota"/>
</dbReference>
<dbReference type="GeneTree" id="ENSGT00730000111474"/>
<dbReference type="HOGENOM" id="CLU_039631_0_0_1"/>
<dbReference type="InParanoid" id="Q7TPC1"/>
<dbReference type="OMA" id="RVGGHGM"/>
<dbReference type="OrthoDB" id="9634493at2759"/>
<dbReference type="PhylomeDB" id="Q7TPC1"/>
<dbReference type="Reactome" id="R-MMU-6809371">
    <property type="pathway name" value="Formation of the cornified envelope"/>
</dbReference>
<dbReference type="BioGRID-ORCS" id="386463">
    <property type="hits" value="3 hits in 78 CRISPR screens"/>
</dbReference>
<dbReference type="ChiTaRS" id="Cdsn">
    <property type="organism name" value="mouse"/>
</dbReference>
<dbReference type="PRO" id="PR:Q7TPC1"/>
<dbReference type="Proteomes" id="UP000000589">
    <property type="component" value="Chromosome 17"/>
</dbReference>
<dbReference type="RNAct" id="Q7TPC1">
    <property type="molecule type" value="protein"/>
</dbReference>
<dbReference type="Bgee" id="ENSMUSG00000039518">
    <property type="expression patterns" value="Expressed in lip and 58 other cell types or tissues"/>
</dbReference>
<dbReference type="GO" id="GO:0001533">
    <property type="term" value="C:cornified envelope"/>
    <property type="evidence" value="ECO:0007669"/>
    <property type="project" value="Ensembl"/>
</dbReference>
<dbReference type="GO" id="GO:0030057">
    <property type="term" value="C:desmosome"/>
    <property type="evidence" value="ECO:0000266"/>
    <property type="project" value="MGI"/>
</dbReference>
<dbReference type="GO" id="GO:0005576">
    <property type="term" value="C:extracellular region"/>
    <property type="evidence" value="ECO:0007669"/>
    <property type="project" value="UniProtKB-SubCell"/>
</dbReference>
<dbReference type="GO" id="GO:0042803">
    <property type="term" value="F:protein homodimerization activity"/>
    <property type="evidence" value="ECO:0007669"/>
    <property type="project" value="Ensembl"/>
</dbReference>
<dbReference type="GO" id="GO:1990000">
    <property type="term" value="P:amyloid fibril formation"/>
    <property type="evidence" value="ECO:0007669"/>
    <property type="project" value="Ensembl"/>
</dbReference>
<dbReference type="GO" id="GO:0098609">
    <property type="term" value="P:cell-cell adhesion"/>
    <property type="evidence" value="ECO:0007669"/>
    <property type="project" value="Ensembl"/>
</dbReference>
<dbReference type="GO" id="GO:0003336">
    <property type="term" value="P:corneocyte desquamation"/>
    <property type="evidence" value="ECO:0007669"/>
    <property type="project" value="Ensembl"/>
</dbReference>
<dbReference type="GO" id="GO:1905716">
    <property type="term" value="P:negative regulation of cornification"/>
    <property type="evidence" value="ECO:0007669"/>
    <property type="project" value="Ensembl"/>
</dbReference>
<dbReference type="GO" id="GO:0043589">
    <property type="term" value="P:skin morphogenesis"/>
    <property type="evidence" value="ECO:0000250"/>
    <property type="project" value="UniProtKB"/>
</dbReference>
<dbReference type="InterPro" id="IPR026087">
    <property type="entry name" value="Corneodesmosin"/>
</dbReference>
<dbReference type="PANTHER" id="PTHR23207">
    <property type="entry name" value="CORNEODESMOSIN"/>
    <property type="match status" value="1"/>
</dbReference>
<dbReference type="PANTHER" id="PTHR23207:SF2">
    <property type="entry name" value="CORNEODESMOSIN"/>
    <property type="match status" value="1"/>
</dbReference>
<gene>
    <name type="primary">Cdsn</name>
</gene>
<sequence length="561" mass="54313">MGSSRAPRMGSVGGHGLMALLMAGLILPGILAKSIGTLSDPCKDPTRITSPNDPCLIGKTGSNSISSQGGSSSFSSQGGSSSFSSHGGSSSSQGSSSGSLIYKPGTGYSQSSYSYGSGGSRPGGSGSQSGSSGSQSGSSGSQSGSSGSQSGSSGSQSGSSGSQSGSSGSQSGSSGSQSGSSGSQSGRWVSSSSQWVSSSSQSGSSGSSRDRPGSGSALPTGDKTSGMSQSGGSSTSQSSSSNLRPCSSNVPDSPCSGGPVITHSGPYISGTHTVSGGQRPVVVVVEQHGSGGPGFQGMPCSNGGPAGKPCPPITSVQKPYGGYEVVGGSANSYLVPGMTYSGGKIYPVGYFTKDNPIRGSPGAPSFAAGPPVSEGKYFSSNPIIPSRGSSSSSGYPVGVAFQPVGSGGVQPCGTGSVSSKGPCSGTRIQITSSSSSTSYHPCSGGPSQGPCSSPGTGSISGGSSSLSSGKIVLQPCGSKSTSSGYPCLSVPSSPLNGGLNGSPQPVPSVGVKLCGLNSPGRVPCRSIRNILTQVKPLGPQLMDPKVSLPQGEPQGEPLEKS</sequence>
<accession>Q7TPC1</accession>
<accession>E9QLN3</accession>
<proteinExistence type="evidence at transcript level"/>
<name>CDSN_MOUSE</name>
<evidence type="ECO:0000250" key="1"/>
<evidence type="ECO:0000255" key="2"/>
<evidence type="ECO:0000256" key="3">
    <source>
        <dbReference type="SAM" id="MobiDB-lite"/>
    </source>
</evidence>
<evidence type="ECO:0000305" key="4"/>
<comment type="function">
    <text evidence="1">Important for the epidermal barrier integrity.</text>
</comment>
<comment type="subcellular location">
    <subcellularLocation>
        <location>Secreted</location>
    </subcellularLocation>
    <text evidence="1">Found in corneodesmosomes, the intercellular structures that are involved in desquamation.</text>
</comment>
<reference key="1">
    <citation type="journal article" date="2009" name="PLoS Biol.">
        <title>Lineage-specific biology revealed by a finished genome assembly of the mouse.</title>
        <authorList>
            <person name="Church D.M."/>
            <person name="Goodstadt L."/>
            <person name="Hillier L.W."/>
            <person name="Zody M.C."/>
            <person name="Goldstein S."/>
            <person name="She X."/>
            <person name="Bult C.J."/>
            <person name="Agarwala R."/>
            <person name="Cherry J.L."/>
            <person name="DiCuccio M."/>
            <person name="Hlavina W."/>
            <person name="Kapustin Y."/>
            <person name="Meric P."/>
            <person name="Maglott D."/>
            <person name="Birtle Z."/>
            <person name="Marques A.C."/>
            <person name="Graves T."/>
            <person name="Zhou S."/>
            <person name="Teague B."/>
            <person name="Potamousis K."/>
            <person name="Churas C."/>
            <person name="Place M."/>
            <person name="Herschleb J."/>
            <person name="Runnheim R."/>
            <person name="Forrest D."/>
            <person name="Amos-Landgraf J."/>
            <person name="Schwartz D.C."/>
            <person name="Cheng Z."/>
            <person name="Lindblad-Toh K."/>
            <person name="Eichler E.E."/>
            <person name="Ponting C.P."/>
        </authorList>
    </citation>
    <scope>NUCLEOTIDE SEQUENCE [LARGE SCALE GENOMIC DNA]</scope>
    <source>
        <strain>C57BL/6J</strain>
    </source>
</reference>
<reference key="2">
    <citation type="journal article" date="2004" name="Genome Res.">
        <title>The status, quality, and expansion of the NIH full-length cDNA project: the Mammalian Gene Collection (MGC).</title>
        <authorList>
            <consortium name="The MGC Project Team"/>
        </authorList>
    </citation>
    <scope>NUCLEOTIDE SEQUENCE [LARGE SCALE MRNA]</scope>
    <source>
        <strain>C3H/He</strain>
        <tissue>Osteoblast</tissue>
    </source>
</reference>
<keyword id="KW-1185">Reference proteome</keyword>
<keyword id="KW-0964">Secreted</keyword>
<keyword id="KW-0732">Signal</keyword>
<feature type="signal peptide" evidence="2">
    <location>
        <begin position="1"/>
        <end position="32"/>
    </location>
</feature>
<feature type="chain" id="PRO_0000020914" description="Corneodesmosin">
    <location>
        <begin position="33"/>
        <end position="561"/>
    </location>
</feature>
<feature type="region of interest" description="Disordered" evidence="3">
    <location>
        <begin position="41"/>
        <end position="275"/>
    </location>
</feature>
<feature type="region of interest" description="Disordered" evidence="3">
    <location>
        <begin position="415"/>
        <end position="466"/>
    </location>
</feature>
<feature type="region of interest" description="Disordered" evidence="3">
    <location>
        <begin position="536"/>
        <end position="561"/>
    </location>
</feature>
<feature type="compositionally biased region" description="Low complexity" evidence="3">
    <location>
        <begin position="61"/>
        <end position="99"/>
    </location>
</feature>
<feature type="compositionally biased region" description="Gly residues" evidence="3">
    <location>
        <begin position="116"/>
        <end position="127"/>
    </location>
</feature>
<feature type="compositionally biased region" description="Low complexity" evidence="3">
    <location>
        <begin position="128"/>
        <end position="207"/>
    </location>
</feature>
<feature type="compositionally biased region" description="Low complexity" evidence="3">
    <location>
        <begin position="224"/>
        <end position="248"/>
    </location>
</feature>
<feature type="compositionally biased region" description="Polar residues" evidence="3">
    <location>
        <begin position="415"/>
        <end position="430"/>
    </location>
</feature>
<feature type="compositionally biased region" description="Low complexity" evidence="3">
    <location>
        <begin position="431"/>
        <end position="466"/>
    </location>
</feature>
<feature type="sequence conflict" description="In Ref. 2; AAH55373." evidence="4" ref="2">
    <original>R</original>
    <variation>Q</variation>
    <location>
        <position position="5"/>
    </location>
</feature>
<feature type="sequence conflict" description="In Ref. 2; AAH55373." evidence="4" ref="2">
    <original>S</original>
    <variation>T</variation>
    <location>
        <position position="129"/>
    </location>
</feature>
<feature type="sequence conflict" description="In Ref. 2; AAH55373." evidence="4" ref="2">
    <original>G</original>
    <variation>S</variation>
    <location>
        <position position="133"/>
    </location>
</feature>
<feature type="sequence conflict" description="In Ref. 2; AAH55373." evidence="4" ref="2">
    <original>S</original>
    <variation>T</variation>
    <location>
        <position position="136"/>
    </location>
</feature>
<feature type="sequence conflict" description="In Ref. 2; AAH55373." evidence="4" ref="2">
    <original>G</original>
    <variation>S</variation>
    <location>
        <position position="140"/>
    </location>
</feature>
<feature type="sequence conflict" description="In Ref. 2; AAH55373." evidence="4" ref="2">
    <original>Q</original>
    <variation>H</variation>
    <location>
        <position position="287"/>
    </location>
</feature>
<feature type="sequence conflict" description="In Ref. 2; AAH55373." evidence="4" ref="2">
    <original>G</original>
    <variation>A</variation>
    <location>
        <position position="291"/>
    </location>
</feature>
<feature type="sequence conflict" description="In Ref. 2; AAH55373." evidence="4" ref="2">
    <original>A</original>
    <variation>V</variation>
    <location>
        <position position="400"/>
    </location>
</feature>
<feature type="sequence conflict" description="In Ref. 2; AAH55373." evidence="4" ref="2">
    <original>P</original>
    <variation>S</variation>
    <location>
        <position position="446"/>
    </location>
</feature>
<protein>
    <recommendedName>
        <fullName>Corneodesmosin</fullName>
    </recommendedName>
</protein>